<sequence length="440" mass="50288">MSEFSQTVPELVAWARKNDFSISLPVDRLSFLLAIATLNGERLEGEMSEGELVDAFRHVSDAFEQTSETISQRANNAINDLVRQRLLNRFTSEITEGNAIYRLTPLGIGITDYYIRQREFSTLRLSMQLSIVAGELKRAADAAEEGGDEFHWHRNVFAPLKYSVAEIFDSIDLTQRIMDEQQQLVKDDIAQLLNKDWRAAISSCELLLSETSGTLRELQDTLDAAGDKLQANLLRIQDSTMARDDLHFVDRLVFDLQSKLDRIVSWGQQAIDLWIGYDRHVHKFIRTAIDMDKNRVFAQRLRQSVQTYFDEPWALTYANADRLLDMRDEEMALRDEEVTGELPADLEFEEFNEIREQLAALIEAQLAVYKEKGIPLDLGLVAREFLAQYPRGRHFDVARIVVDQAVQLGVAQADFTGLPAKWQPINDYGAKVQAHVIDKY</sequence>
<evidence type="ECO:0000255" key="1">
    <source>
        <dbReference type="HAMAP-Rule" id="MF_01803"/>
    </source>
</evidence>
<protein>
    <recommendedName>
        <fullName evidence="1">Chromosome partition protein MukF</fullName>
    </recommendedName>
</protein>
<gene>
    <name evidence="1" type="primary">mukF</name>
    <name type="ordered locus">KPN78578_09240</name>
    <name type="ORF">KPN_00949</name>
</gene>
<feature type="chain" id="PRO_1000069935" description="Chromosome partition protein MukF">
    <location>
        <begin position="1"/>
        <end position="440"/>
    </location>
</feature>
<feature type="region of interest" description="Leucine-zipper">
    <location>
        <begin position="208"/>
        <end position="236"/>
    </location>
</feature>
<proteinExistence type="inferred from homology"/>
<accession>A6T714</accession>
<organism>
    <name type="scientific">Klebsiella pneumoniae subsp. pneumoniae (strain ATCC 700721 / MGH 78578)</name>
    <dbReference type="NCBI Taxonomy" id="272620"/>
    <lineage>
        <taxon>Bacteria</taxon>
        <taxon>Pseudomonadati</taxon>
        <taxon>Pseudomonadota</taxon>
        <taxon>Gammaproteobacteria</taxon>
        <taxon>Enterobacterales</taxon>
        <taxon>Enterobacteriaceae</taxon>
        <taxon>Klebsiella/Raoultella group</taxon>
        <taxon>Klebsiella</taxon>
        <taxon>Klebsiella pneumoniae complex</taxon>
    </lineage>
</organism>
<reference key="1">
    <citation type="submission" date="2006-09" db="EMBL/GenBank/DDBJ databases">
        <authorList>
            <consortium name="The Klebsiella pneumonia Genome Sequencing Project"/>
            <person name="McClelland M."/>
            <person name="Sanderson E.K."/>
            <person name="Spieth J."/>
            <person name="Clifton W.S."/>
            <person name="Latreille P."/>
            <person name="Sabo A."/>
            <person name="Pepin K."/>
            <person name="Bhonagiri V."/>
            <person name="Porwollik S."/>
            <person name="Ali J."/>
            <person name="Wilson R.K."/>
        </authorList>
    </citation>
    <scope>NUCLEOTIDE SEQUENCE [LARGE SCALE GENOMIC DNA]</scope>
    <source>
        <strain>ATCC 700721 / MGH 78578</strain>
    </source>
</reference>
<dbReference type="EMBL" id="CP000647">
    <property type="protein sequence ID" value="ABR76385.1"/>
    <property type="molecule type" value="Genomic_DNA"/>
</dbReference>
<dbReference type="RefSeq" id="WP_002898189.1">
    <property type="nucleotide sequence ID" value="NC_009648.1"/>
</dbReference>
<dbReference type="SMR" id="A6T714"/>
<dbReference type="STRING" id="272620.KPN_00949"/>
<dbReference type="jPOST" id="A6T714"/>
<dbReference type="PaxDb" id="272620-KPN_00949"/>
<dbReference type="EnsemblBacteria" id="ABR76385">
    <property type="protein sequence ID" value="ABR76385"/>
    <property type="gene ID" value="KPN_00949"/>
</dbReference>
<dbReference type="GeneID" id="93253207"/>
<dbReference type="KEGG" id="kpn:KPN_00949"/>
<dbReference type="HOGENOM" id="CLU_049853_0_0_6"/>
<dbReference type="Proteomes" id="UP000000265">
    <property type="component" value="Chromosome"/>
</dbReference>
<dbReference type="GO" id="GO:0005737">
    <property type="term" value="C:cytoplasm"/>
    <property type="evidence" value="ECO:0007669"/>
    <property type="project" value="UniProtKB-UniRule"/>
</dbReference>
<dbReference type="GO" id="GO:0009295">
    <property type="term" value="C:nucleoid"/>
    <property type="evidence" value="ECO:0007669"/>
    <property type="project" value="UniProtKB-SubCell"/>
</dbReference>
<dbReference type="GO" id="GO:0005509">
    <property type="term" value="F:calcium ion binding"/>
    <property type="evidence" value="ECO:0007669"/>
    <property type="project" value="UniProtKB-UniRule"/>
</dbReference>
<dbReference type="GO" id="GO:0051301">
    <property type="term" value="P:cell division"/>
    <property type="evidence" value="ECO:0007669"/>
    <property type="project" value="UniProtKB-KW"/>
</dbReference>
<dbReference type="GO" id="GO:0030261">
    <property type="term" value="P:chromosome condensation"/>
    <property type="evidence" value="ECO:0007669"/>
    <property type="project" value="UniProtKB-KW"/>
</dbReference>
<dbReference type="GO" id="GO:0007059">
    <property type="term" value="P:chromosome segregation"/>
    <property type="evidence" value="ECO:0007669"/>
    <property type="project" value="UniProtKB-UniRule"/>
</dbReference>
<dbReference type="GO" id="GO:0006260">
    <property type="term" value="P:DNA replication"/>
    <property type="evidence" value="ECO:0007669"/>
    <property type="project" value="UniProtKB-UniRule"/>
</dbReference>
<dbReference type="CDD" id="cd16337">
    <property type="entry name" value="MukF_C"/>
    <property type="match status" value="1"/>
</dbReference>
<dbReference type="CDD" id="cd16335">
    <property type="entry name" value="MukF_N"/>
    <property type="match status" value="1"/>
</dbReference>
<dbReference type="Gene3D" id="1.20.58.590">
    <property type="entry name" value="Chromosome partition protein MukF, middle domain"/>
    <property type="match status" value="1"/>
</dbReference>
<dbReference type="Gene3D" id="1.10.225.40">
    <property type="entry name" value="MukF, C-terminal domain"/>
    <property type="match status" value="1"/>
</dbReference>
<dbReference type="Gene3D" id="1.10.10.10">
    <property type="entry name" value="Winged helix-like DNA-binding domain superfamily/Winged helix DNA-binding domain"/>
    <property type="match status" value="1"/>
</dbReference>
<dbReference type="HAMAP" id="MF_01803">
    <property type="entry name" value="MukF"/>
    <property type="match status" value="1"/>
</dbReference>
<dbReference type="InterPro" id="IPR005582">
    <property type="entry name" value="Chromosome_partition_MukF"/>
</dbReference>
<dbReference type="InterPro" id="IPR033441">
    <property type="entry name" value="MukF_C"/>
</dbReference>
<dbReference type="InterPro" id="IPR038198">
    <property type="entry name" value="MukF_C_sf"/>
</dbReference>
<dbReference type="InterPro" id="IPR033440">
    <property type="entry name" value="MukF_M"/>
</dbReference>
<dbReference type="InterPro" id="IPR036141">
    <property type="entry name" value="MukF_M_sp"/>
</dbReference>
<dbReference type="InterPro" id="IPR033439">
    <property type="entry name" value="MukF_WHTH"/>
</dbReference>
<dbReference type="InterPro" id="IPR036388">
    <property type="entry name" value="WH-like_DNA-bd_sf"/>
</dbReference>
<dbReference type="InterPro" id="IPR036390">
    <property type="entry name" value="WH_DNA-bd_sf"/>
</dbReference>
<dbReference type="NCBIfam" id="NF003615">
    <property type="entry name" value="PRK05260.1"/>
    <property type="match status" value="1"/>
</dbReference>
<dbReference type="Pfam" id="PF03882">
    <property type="entry name" value="KicB"/>
    <property type="match status" value="1"/>
</dbReference>
<dbReference type="Pfam" id="PF17193">
    <property type="entry name" value="MukF_C"/>
    <property type="match status" value="1"/>
</dbReference>
<dbReference type="Pfam" id="PF17192">
    <property type="entry name" value="MukF_M"/>
    <property type="match status" value="1"/>
</dbReference>
<dbReference type="PIRSF" id="PIRSF018282">
    <property type="entry name" value="MukF"/>
    <property type="match status" value="1"/>
</dbReference>
<dbReference type="SUPFAM" id="SSF140570">
    <property type="entry name" value="MukF C-terminal domain-like"/>
    <property type="match status" value="1"/>
</dbReference>
<dbReference type="SUPFAM" id="SSF46785">
    <property type="entry name" value="Winged helix' DNA-binding domain"/>
    <property type="match status" value="1"/>
</dbReference>
<comment type="function">
    <text evidence="1">Involved in chromosome condensation, segregation and cell cycle progression. May participate in facilitating chromosome segregation by condensation DNA from both sides of a centrally located replisome during cell division. Not required for mini-F plasmid partitioning. Probably acts via its interaction with MukB and MukE. Overexpression results in anucleate cells. It has a calcium binding activity.</text>
</comment>
<comment type="subunit">
    <text evidence="1">Interacts, and probably forms a ternary complex, with MukE and MukB via its C-terminal region. The complex formation is stimulated by calcium or magnesium. It is required for an interaction between MukE and MukB.</text>
</comment>
<comment type="subcellular location">
    <subcellularLocation>
        <location evidence="1">Cytoplasm</location>
        <location evidence="1">Nucleoid</location>
    </subcellularLocation>
    <text evidence="1">Restricted to the nucleoid region.</text>
</comment>
<comment type="similarity">
    <text evidence="1">Belongs to the MukF family.</text>
</comment>
<name>MUKF_KLEP7</name>
<keyword id="KW-0106">Calcium</keyword>
<keyword id="KW-0131">Cell cycle</keyword>
<keyword id="KW-0132">Cell division</keyword>
<keyword id="KW-0159">Chromosome partition</keyword>
<keyword id="KW-0963">Cytoplasm</keyword>
<keyword id="KW-0226">DNA condensation</keyword>